<accession>Q6GHR6</accession>
<name>ARCC1_STAAR</name>
<evidence type="ECO:0000305" key="1"/>
<proteinExistence type="inferred from homology"/>
<keyword id="KW-0056">Arginine metabolism</keyword>
<keyword id="KW-0067">ATP-binding</keyword>
<keyword id="KW-0963">Cytoplasm</keyword>
<keyword id="KW-0418">Kinase</keyword>
<keyword id="KW-0547">Nucleotide-binding</keyword>
<keyword id="KW-0808">Transferase</keyword>
<sequence>MAKIVVALGGNALGKSPQEQLKLVKNTAKSLVGLITKGHEIVISHGNGPQVGSINLGLNYAAEHNQGPAFPFAECGAMSQAYIGYQLQESLQNELHSIGMDKQVVTLVTQVEVDENDPAFNNPSKPIGLFYNKEEAEQIQKEKGFTFVEDAGRGYRRVVPSPQPISIIELESIKTLIKNDTLVIAAGGGGIPVIREQHDGFKGIDAVIDKDKTSALLGANIQCDQLIILTAIDYVYINFNTENQQPLKTTNVDELKRYIDENQFAKGSMLPKIEAAISFIENNPKGSVLITSLNELDAALEGKVGTVIKK</sequence>
<comment type="catalytic activity">
    <reaction>
        <text>hydrogencarbonate + NH4(+) + ATP = carbamoyl phosphate + ADP + H2O + H(+)</text>
        <dbReference type="Rhea" id="RHEA:10152"/>
        <dbReference type="ChEBI" id="CHEBI:15377"/>
        <dbReference type="ChEBI" id="CHEBI:15378"/>
        <dbReference type="ChEBI" id="CHEBI:17544"/>
        <dbReference type="ChEBI" id="CHEBI:28938"/>
        <dbReference type="ChEBI" id="CHEBI:30616"/>
        <dbReference type="ChEBI" id="CHEBI:58228"/>
        <dbReference type="ChEBI" id="CHEBI:456216"/>
        <dbReference type="EC" id="2.7.2.2"/>
    </reaction>
</comment>
<comment type="pathway">
    <text>Metabolic intermediate metabolism; carbamoyl phosphate degradation; CO(2) and NH(3) from carbamoyl phosphate: step 1/1.</text>
</comment>
<comment type="subcellular location">
    <subcellularLocation>
        <location evidence="1">Cytoplasm</location>
    </subcellularLocation>
</comment>
<comment type="similarity">
    <text evidence="1">Belongs to the carbamate kinase family.</text>
</comment>
<reference key="1">
    <citation type="journal article" date="2004" name="Proc. Natl. Acad. Sci. U.S.A.">
        <title>Complete genomes of two clinical Staphylococcus aureus strains: evidence for the rapid evolution of virulence and drug resistance.</title>
        <authorList>
            <person name="Holden M.T.G."/>
            <person name="Feil E.J."/>
            <person name="Lindsay J.A."/>
            <person name="Peacock S.J."/>
            <person name="Day N.P.J."/>
            <person name="Enright M.C."/>
            <person name="Foster T.J."/>
            <person name="Moore C.E."/>
            <person name="Hurst L."/>
            <person name="Atkin R."/>
            <person name="Barron A."/>
            <person name="Bason N."/>
            <person name="Bentley S.D."/>
            <person name="Chillingworth C."/>
            <person name="Chillingworth T."/>
            <person name="Churcher C."/>
            <person name="Clark L."/>
            <person name="Corton C."/>
            <person name="Cronin A."/>
            <person name="Doggett J."/>
            <person name="Dowd L."/>
            <person name="Feltwell T."/>
            <person name="Hance Z."/>
            <person name="Harris B."/>
            <person name="Hauser H."/>
            <person name="Holroyd S."/>
            <person name="Jagels K."/>
            <person name="James K.D."/>
            <person name="Lennard N."/>
            <person name="Line A."/>
            <person name="Mayes R."/>
            <person name="Moule S."/>
            <person name="Mungall K."/>
            <person name="Ormond D."/>
            <person name="Quail M.A."/>
            <person name="Rabbinowitsch E."/>
            <person name="Rutherford K.M."/>
            <person name="Sanders M."/>
            <person name="Sharp S."/>
            <person name="Simmonds M."/>
            <person name="Stevens K."/>
            <person name="Whitehead S."/>
            <person name="Barrell B.G."/>
            <person name="Spratt B.G."/>
            <person name="Parkhill J."/>
        </authorList>
    </citation>
    <scope>NUCLEOTIDE SEQUENCE [LARGE SCALE GENOMIC DNA]</scope>
    <source>
        <strain>MRSA252</strain>
    </source>
</reference>
<organism>
    <name type="scientific">Staphylococcus aureus (strain MRSA252)</name>
    <dbReference type="NCBI Taxonomy" id="282458"/>
    <lineage>
        <taxon>Bacteria</taxon>
        <taxon>Bacillati</taxon>
        <taxon>Bacillota</taxon>
        <taxon>Bacilli</taxon>
        <taxon>Bacillales</taxon>
        <taxon>Staphylococcaceae</taxon>
        <taxon>Staphylococcus</taxon>
    </lineage>
</organism>
<gene>
    <name type="primary">arcC1</name>
    <name type="ordered locus">SAR1143</name>
</gene>
<feature type="chain" id="PRO_0000269235" description="Carbamate kinase 1">
    <location>
        <begin position="1"/>
        <end position="310"/>
    </location>
</feature>
<protein>
    <recommendedName>
        <fullName>Carbamate kinase 1</fullName>
        <ecNumber>2.7.2.2</ecNumber>
    </recommendedName>
</protein>
<dbReference type="EC" id="2.7.2.2"/>
<dbReference type="EMBL" id="BX571856">
    <property type="protein sequence ID" value="CAG40147.1"/>
    <property type="molecule type" value="Genomic_DNA"/>
</dbReference>
<dbReference type="SMR" id="Q6GHR6"/>
<dbReference type="KEGG" id="sar:SAR1143"/>
<dbReference type="HOGENOM" id="CLU_076278_0_0_9"/>
<dbReference type="UniPathway" id="UPA00996">
    <property type="reaction ID" value="UER00366"/>
</dbReference>
<dbReference type="Proteomes" id="UP000000596">
    <property type="component" value="Chromosome"/>
</dbReference>
<dbReference type="GO" id="GO:0005829">
    <property type="term" value="C:cytosol"/>
    <property type="evidence" value="ECO:0007669"/>
    <property type="project" value="TreeGrafter"/>
</dbReference>
<dbReference type="GO" id="GO:0005524">
    <property type="term" value="F:ATP binding"/>
    <property type="evidence" value="ECO:0007669"/>
    <property type="project" value="UniProtKB-KW"/>
</dbReference>
<dbReference type="GO" id="GO:0008804">
    <property type="term" value="F:carbamate kinase activity"/>
    <property type="evidence" value="ECO:0007669"/>
    <property type="project" value="UniProtKB-EC"/>
</dbReference>
<dbReference type="GO" id="GO:0019546">
    <property type="term" value="P:arginine deiminase pathway"/>
    <property type="evidence" value="ECO:0007669"/>
    <property type="project" value="TreeGrafter"/>
</dbReference>
<dbReference type="CDD" id="cd04235">
    <property type="entry name" value="AAK_CK"/>
    <property type="match status" value="1"/>
</dbReference>
<dbReference type="FunFam" id="3.40.1160.10:FF:000007">
    <property type="entry name" value="Carbamate kinase"/>
    <property type="match status" value="1"/>
</dbReference>
<dbReference type="Gene3D" id="3.40.1160.10">
    <property type="entry name" value="Acetylglutamate kinase-like"/>
    <property type="match status" value="1"/>
</dbReference>
<dbReference type="InterPro" id="IPR036393">
    <property type="entry name" value="AceGlu_kinase-like_sf"/>
</dbReference>
<dbReference type="InterPro" id="IPR001048">
    <property type="entry name" value="Asp/Glu/Uridylate_kinase"/>
</dbReference>
<dbReference type="InterPro" id="IPR003964">
    <property type="entry name" value="Carb_kinase"/>
</dbReference>
<dbReference type="NCBIfam" id="TIGR00746">
    <property type="entry name" value="arcC"/>
    <property type="match status" value="1"/>
</dbReference>
<dbReference type="NCBIfam" id="NF009007">
    <property type="entry name" value="PRK12352.1"/>
    <property type="match status" value="1"/>
</dbReference>
<dbReference type="PANTHER" id="PTHR30409">
    <property type="entry name" value="CARBAMATE KINASE"/>
    <property type="match status" value="1"/>
</dbReference>
<dbReference type="PANTHER" id="PTHR30409:SF1">
    <property type="entry name" value="CARBAMATE KINASE-RELATED"/>
    <property type="match status" value="1"/>
</dbReference>
<dbReference type="Pfam" id="PF00696">
    <property type="entry name" value="AA_kinase"/>
    <property type="match status" value="1"/>
</dbReference>
<dbReference type="PIRSF" id="PIRSF000723">
    <property type="entry name" value="Carbamate_kin"/>
    <property type="match status" value="1"/>
</dbReference>
<dbReference type="PRINTS" id="PR01469">
    <property type="entry name" value="CARBMTKINASE"/>
</dbReference>
<dbReference type="SUPFAM" id="SSF53633">
    <property type="entry name" value="Carbamate kinase-like"/>
    <property type="match status" value="1"/>
</dbReference>